<accession>B1LNT0</accession>
<proteinExistence type="inferred from homology"/>
<evidence type="ECO:0000255" key="1">
    <source>
        <dbReference type="HAMAP-Rule" id="MF_00215"/>
    </source>
</evidence>
<gene>
    <name evidence="1" type="primary">coaA</name>
    <name type="ordered locus">EcSMS35_4422</name>
</gene>
<sequence length="316" mass="36346">MSIKEQTLMTPYLQFDRNQWAALRDSVPMTLSEDEIARLKGINEDLSLEEVAEIYLPLSRLLNFYISSNLRRQAVLEQFLGTNGQRIPYIISIAGSVAVGKSTTARVLQALLSRWPEHRRVELITTDGFLHPNQVLKERGLMKKKGFPESYDMHRLVKFVSDLKSGVPNVTAPVYSHLIYDVIPDGDKTVVQPDILILEGLNVLQSGMDYPHDPHHVFVSDFVDFSIYVDAPEDLLQTWYINRFLKFREGAFTDPDSYFHNYAKLTKEEAINTAMTLWKEINWLNLKQNILPTRERASLILTKSANHAVEEVRLRK</sequence>
<reference key="1">
    <citation type="journal article" date="2008" name="J. Bacteriol.">
        <title>Insights into the environmental resistance gene pool from the genome sequence of the multidrug-resistant environmental isolate Escherichia coli SMS-3-5.</title>
        <authorList>
            <person name="Fricke W.F."/>
            <person name="Wright M.S."/>
            <person name="Lindell A.H."/>
            <person name="Harkins D.M."/>
            <person name="Baker-Austin C."/>
            <person name="Ravel J."/>
            <person name="Stepanauskas R."/>
        </authorList>
    </citation>
    <scope>NUCLEOTIDE SEQUENCE [LARGE SCALE GENOMIC DNA]</scope>
    <source>
        <strain>SMS-3-5 / SECEC</strain>
    </source>
</reference>
<dbReference type="EC" id="2.7.1.33" evidence="1"/>
<dbReference type="EMBL" id="CP000970">
    <property type="protein sequence ID" value="ACB16626.1"/>
    <property type="molecule type" value="Genomic_DNA"/>
</dbReference>
<dbReference type="RefSeq" id="WP_000023085.1">
    <property type="nucleotide sequence ID" value="NC_010498.1"/>
</dbReference>
<dbReference type="SMR" id="B1LNT0"/>
<dbReference type="KEGG" id="ecm:EcSMS35_4422"/>
<dbReference type="HOGENOM" id="CLU_053818_1_1_6"/>
<dbReference type="UniPathway" id="UPA00241">
    <property type="reaction ID" value="UER00352"/>
</dbReference>
<dbReference type="Proteomes" id="UP000007011">
    <property type="component" value="Chromosome"/>
</dbReference>
<dbReference type="GO" id="GO:0005737">
    <property type="term" value="C:cytoplasm"/>
    <property type="evidence" value="ECO:0007669"/>
    <property type="project" value="UniProtKB-SubCell"/>
</dbReference>
<dbReference type="GO" id="GO:0005524">
    <property type="term" value="F:ATP binding"/>
    <property type="evidence" value="ECO:0007669"/>
    <property type="project" value="UniProtKB-UniRule"/>
</dbReference>
<dbReference type="GO" id="GO:0004594">
    <property type="term" value="F:pantothenate kinase activity"/>
    <property type="evidence" value="ECO:0007669"/>
    <property type="project" value="UniProtKB-UniRule"/>
</dbReference>
<dbReference type="GO" id="GO:0015937">
    <property type="term" value="P:coenzyme A biosynthetic process"/>
    <property type="evidence" value="ECO:0007669"/>
    <property type="project" value="UniProtKB-UniRule"/>
</dbReference>
<dbReference type="CDD" id="cd02025">
    <property type="entry name" value="PanK"/>
    <property type="match status" value="1"/>
</dbReference>
<dbReference type="FunFam" id="3.40.50.300:FF:000242">
    <property type="entry name" value="Pantothenate kinase"/>
    <property type="match status" value="1"/>
</dbReference>
<dbReference type="Gene3D" id="3.40.50.300">
    <property type="entry name" value="P-loop containing nucleotide triphosphate hydrolases"/>
    <property type="match status" value="1"/>
</dbReference>
<dbReference type="HAMAP" id="MF_00215">
    <property type="entry name" value="Pantothen_kinase_1"/>
    <property type="match status" value="1"/>
</dbReference>
<dbReference type="InterPro" id="IPR027417">
    <property type="entry name" value="P-loop_NTPase"/>
</dbReference>
<dbReference type="InterPro" id="IPR004566">
    <property type="entry name" value="PanK"/>
</dbReference>
<dbReference type="InterPro" id="IPR006083">
    <property type="entry name" value="PRK/URK"/>
</dbReference>
<dbReference type="NCBIfam" id="TIGR00554">
    <property type="entry name" value="panK_bact"/>
    <property type="match status" value="1"/>
</dbReference>
<dbReference type="PANTHER" id="PTHR10285">
    <property type="entry name" value="URIDINE KINASE"/>
    <property type="match status" value="1"/>
</dbReference>
<dbReference type="Pfam" id="PF00485">
    <property type="entry name" value="PRK"/>
    <property type="match status" value="1"/>
</dbReference>
<dbReference type="PIRSF" id="PIRSF000545">
    <property type="entry name" value="Pantothenate_kin"/>
    <property type="match status" value="1"/>
</dbReference>
<dbReference type="SUPFAM" id="SSF52540">
    <property type="entry name" value="P-loop containing nucleoside triphosphate hydrolases"/>
    <property type="match status" value="1"/>
</dbReference>
<feature type="chain" id="PRO_1000189610" description="Pantothenate kinase">
    <location>
        <begin position="1"/>
        <end position="316"/>
    </location>
</feature>
<feature type="binding site" evidence="1">
    <location>
        <begin position="95"/>
        <end position="102"/>
    </location>
    <ligand>
        <name>ATP</name>
        <dbReference type="ChEBI" id="CHEBI:30616"/>
    </ligand>
</feature>
<name>COAA_ECOSM</name>
<organism>
    <name type="scientific">Escherichia coli (strain SMS-3-5 / SECEC)</name>
    <dbReference type="NCBI Taxonomy" id="439855"/>
    <lineage>
        <taxon>Bacteria</taxon>
        <taxon>Pseudomonadati</taxon>
        <taxon>Pseudomonadota</taxon>
        <taxon>Gammaproteobacteria</taxon>
        <taxon>Enterobacterales</taxon>
        <taxon>Enterobacteriaceae</taxon>
        <taxon>Escherichia</taxon>
    </lineage>
</organism>
<comment type="catalytic activity">
    <reaction evidence="1">
        <text>(R)-pantothenate + ATP = (R)-4'-phosphopantothenate + ADP + H(+)</text>
        <dbReference type="Rhea" id="RHEA:16373"/>
        <dbReference type="ChEBI" id="CHEBI:10986"/>
        <dbReference type="ChEBI" id="CHEBI:15378"/>
        <dbReference type="ChEBI" id="CHEBI:29032"/>
        <dbReference type="ChEBI" id="CHEBI:30616"/>
        <dbReference type="ChEBI" id="CHEBI:456216"/>
        <dbReference type="EC" id="2.7.1.33"/>
    </reaction>
</comment>
<comment type="pathway">
    <text evidence="1">Cofactor biosynthesis; coenzyme A biosynthesis; CoA from (R)-pantothenate: step 1/5.</text>
</comment>
<comment type="subcellular location">
    <subcellularLocation>
        <location evidence="1">Cytoplasm</location>
    </subcellularLocation>
</comment>
<comment type="similarity">
    <text evidence="1">Belongs to the prokaryotic pantothenate kinase family.</text>
</comment>
<protein>
    <recommendedName>
        <fullName evidence="1">Pantothenate kinase</fullName>
        <ecNumber evidence="1">2.7.1.33</ecNumber>
    </recommendedName>
    <alternativeName>
        <fullName evidence="1">Pantothenic acid kinase</fullName>
    </alternativeName>
</protein>
<keyword id="KW-0067">ATP-binding</keyword>
<keyword id="KW-0173">Coenzyme A biosynthesis</keyword>
<keyword id="KW-0963">Cytoplasm</keyword>
<keyword id="KW-0418">Kinase</keyword>
<keyword id="KW-0547">Nucleotide-binding</keyword>
<keyword id="KW-0808">Transferase</keyword>